<feature type="chain" id="PRO_0000412731" description="3'-5' ssDNA/RNA exonuclease TatD">
    <location>
        <begin position="1"/>
        <end position="263"/>
    </location>
</feature>
<feature type="binding site" evidence="1">
    <location>
        <position position="91"/>
    </location>
    <ligand>
        <name>a divalent metal cation</name>
        <dbReference type="ChEBI" id="CHEBI:60240"/>
    </ligand>
</feature>
<feature type="binding site" evidence="1">
    <location>
        <position position="127"/>
    </location>
    <ligand>
        <name>a divalent metal cation</name>
        <dbReference type="ChEBI" id="CHEBI:60240"/>
    </ligand>
</feature>
<feature type="binding site" evidence="1">
    <location>
        <position position="152"/>
    </location>
    <ligand>
        <name>a divalent metal cation</name>
        <dbReference type="ChEBI" id="CHEBI:60240"/>
    </ligand>
</feature>
<sequence length="263" mass="29295">MFDIGVNLTSSQFVKDHDEVVARAYAAGVNGLLLTGTNLYESQQAQRLAQHYPHCWSTAGVHPHDSSEWRADTGEAIVALAALPEVVAIGECGLDFNRNFSTPQAQEHAFEAQLRIAAELQMPVFMHCRDAHTRFLALLDPWLDKLPGAVLHCFTGTRQEMQECLERGLYIGITGWVCDERRGLALRELLPLIPTEKLLIETDAPYLLPRDLSPKPASRRNEPAYLPHILQRIAHWRGEDPQQLAAATDANAEKLFGITLKSA</sequence>
<proteinExistence type="inferred from homology"/>
<evidence type="ECO:0000255" key="1">
    <source>
        <dbReference type="HAMAP-Rule" id="MF_00901"/>
    </source>
</evidence>
<dbReference type="EC" id="3.1.11.-" evidence="1"/>
<dbReference type="EC" id="3.1.13.-" evidence="1"/>
<dbReference type="EMBL" id="FN543502">
    <property type="protein sequence ID" value="CBG90618.1"/>
    <property type="molecule type" value="Genomic_DNA"/>
</dbReference>
<dbReference type="RefSeq" id="WP_012907894.1">
    <property type="nucleotide sequence ID" value="NC_013716.1"/>
</dbReference>
<dbReference type="SMR" id="D2TUZ4"/>
<dbReference type="STRING" id="637910.ROD_39151"/>
<dbReference type="KEGG" id="cro:ROD_39151"/>
<dbReference type="eggNOG" id="COG0084">
    <property type="taxonomic scope" value="Bacteria"/>
</dbReference>
<dbReference type="HOGENOM" id="CLU_031506_1_2_6"/>
<dbReference type="OrthoDB" id="9810005at2"/>
<dbReference type="Proteomes" id="UP000001889">
    <property type="component" value="Chromosome"/>
</dbReference>
<dbReference type="GO" id="GO:0005737">
    <property type="term" value="C:cytoplasm"/>
    <property type="evidence" value="ECO:0007669"/>
    <property type="project" value="UniProtKB-SubCell"/>
</dbReference>
<dbReference type="GO" id="GO:0000175">
    <property type="term" value="F:3'-5'-RNA exonuclease activity"/>
    <property type="evidence" value="ECO:0007669"/>
    <property type="project" value="UniProtKB-UniRule"/>
</dbReference>
<dbReference type="GO" id="GO:0000287">
    <property type="term" value="F:magnesium ion binding"/>
    <property type="evidence" value="ECO:0007669"/>
    <property type="project" value="UniProtKB-UniRule"/>
</dbReference>
<dbReference type="GO" id="GO:0008310">
    <property type="term" value="F:single-stranded DNA 3'-5' DNA exonuclease activity"/>
    <property type="evidence" value="ECO:0007669"/>
    <property type="project" value="UniProtKB-UniRule"/>
</dbReference>
<dbReference type="CDD" id="cd01310">
    <property type="entry name" value="TatD_DNAse"/>
    <property type="match status" value="1"/>
</dbReference>
<dbReference type="FunFam" id="3.20.20.140:FF:000018">
    <property type="entry name" value="3'-5' ssDNA/RNA exonuclease TatD"/>
    <property type="match status" value="1"/>
</dbReference>
<dbReference type="Gene3D" id="3.20.20.140">
    <property type="entry name" value="Metal-dependent hydrolases"/>
    <property type="match status" value="1"/>
</dbReference>
<dbReference type="HAMAP" id="MF_00901">
    <property type="entry name" value="TatD_exonuclease"/>
    <property type="match status" value="1"/>
</dbReference>
<dbReference type="InterPro" id="IPR018228">
    <property type="entry name" value="DNase_TatD-rel_CS"/>
</dbReference>
<dbReference type="InterPro" id="IPR024918">
    <property type="entry name" value="Exonuc_TatD"/>
</dbReference>
<dbReference type="InterPro" id="IPR032466">
    <property type="entry name" value="Metal_Hydrolase"/>
</dbReference>
<dbReference type="InterPro" id="IPR001130">
    <property type="entry name" value="TatD-like"/>
</dbReference>
<dbReference type="InterPro" id="IPR050891">
    <property type="entry name" value="TatD-type_Hydrolase"/>
</dbReference>
<dbReference type="NCBIfam" id="NF007745">
    <property type="entry name" value="PRK10425.1"/>
    <property type="match status" value="1"/>
</dbReference>
<dbReference type="PANTHER" id="PTHR10060:SF15">
    <property type="entry name" value="DEOXYRIBONUCLEASE TATDN1"/>
    <property type="match status" value="1"/>
</dbReference>
<dbReference type="PANTHER" id="PTHR10060">
    <property type="entry name" value="TATD FAMILY DEOXYRIBONUCLEASE"/>
    <property type="match status" value="1"/>
</dbReference>
<dbReference type="Pfam" id="PF01026">
    <property type="entry name" value="TatD_DNase"/>
    <property type="match status" value="1"/>
</dbReference>
<dbReference type="PIRSF" id="PIRSF005902">
    <property type="entry name" value="DNase_TatD"/>
    <property type="match status" value="1"/>
</dbReference>
<dbReference type="SUPFAM" id="SSF51556">
    <property type="entry name" value="Metallo-dependent hydrolases"/>
    <property type="match status" value="1"/>
</dbReference>
<dbReference type="PROSITE" id="PS01091">
    <property type="entry name" value="TATD_3"/>
    <property type="match status" value="1"/>
</dbReference>
<comment type="function">
    <text evidence="1">3'-5' exonuclease that prefers single-stranded DNA and RNA. May play a role in the H(2)O(2)-induced DNA damage repair.</text>
</comment>
<comment type="cofactor">
    <cofactor evidence="1">
        <name>Mg(2+)</name>
        <dbReference type="ChEBI" id="CHEBI:18420"/>
    </cofactor>
</comment>
<comment type="subunit">
    <text evidence="1">Monomer.</text>
</comment>
<comment type="subcellular location">
    <subcellularLocation>
        <location evidence="1">Cytoplasm</location>
    </subcellularLocation>
</comment>
<comment type="similarity">
    <text evidence="1">Belongs to the metallo-dependent hydrolases superfamily. TatD-type hydrolase family. TatD subfamily.</text>
</comment>
<protein>
    <recommendedName>
        <fullName evidence="1">3'-5' ssDNA/RNA exonuclease TatD</fullName>
        <ecNumber evidence="1">3.1.11.-</ecNumber>
        <ecNumber evidence="1">3.1.13.-</ecNumber>
    </recommendedName>
    <alternativeName>
        <fullName evidence="1">DNase TatD</fullName>
    </alternativeName>
</protein>
<keyword id="KW-0963">Cytoplasm</keyword>
<keyword id="KW-0269">Exonuclease</keyword>
<keyword id="KW-0378">Hydrolase</keyword>
<keyword id="KW-0460">Magnesium</keyword>
<keyword id="KW-0479">Metal-binding</keyword>
<keyword id="KW-0540">Nuclease</keyword>
<keyword id="KW-1185">Reference proteome</keyword>
<name>TATD_CITRI</name>
<accession>D2TUZ4</accession>
<organism>
    <name type="scientific">Citrobacter rodentium (strain ICC168)</name>
    <name type="common">Citrobacter freundii biotype 4280</name>
    <dbReference type="NCBI Taxonomy" id="637910"/>
    <lineage>
        <taxon>Bacteria</taxon>
        <taxon>Pseudomonadati</taxon>
        <taxon>Pseudomonadota</taxon>
        <taxon>Gammaproteobacteria</taxon>
        <taxon>Enterobacterales</taxon>
        <taxon>Enterobacteriaceae</taxon>
        <taxon>Citrobacter</taxon>
    </lineage>
</organism>
<reference key="1">
    <citation type="journal article" date="2010" name="J. Bacteriol.">
        <title>The Citrobacter rodentium genome sequence reveals convergent evolution with human pathogenic Escherichia coli.</title>
        <authorList>
            <person name="Petty N.K."/>
            <person name="Bulgin R."/>
            <person name="Crepin V.F."/>
            <person name="Cerdeno-Tarraga A.M."/>
            <person name="Schroeder G.N."/>
            <person name="Quail M.A."/>
            <person name="Lennard N."/>
            <person name="Corton C."/>
            <person name="Barron A."/>
            <person name="Clark L."/>
            <person name="Toribio A.L."/>
            <person name="Parkhill J."/>
            <person name="Dougan G."/>
            <person name="Frankel G."/>
            <person name="Thomson N.R."/>
        </authorList>
    </citation>
    <scope>NUCLEOTIDE SEQUENCE [LARGE SCALE GENOMIC DNA]</scope>
    <source>
        <strain>ICC168</strain>
    </source>
</reference>
<gene>
    <name evidence="1" type="primary">tatD</name>
    <name type="ordered locus">ROD_39151</name>
</gene>